<gene>
    <name evidence="1" type="primary">minE</name>
    <name type="ordered locus">SPC_1914</name>
</gene>
<protein>
    <recommendedName>
        <fullName evidence="1">Cell division topological specificity factor</fullName>
    </recommendedName>
</protein>
<keyword id="KW-0131">Cell cycle</keyword>
<keyword id="KW-0132">Cell division</keyword>
<accession>C0Q319</accession>
<sequence>MALLDFFLSRKKSTANIAKERLQIIVAERRRSDAEPHYLPQLRKDILEVICKYVQIDPEMVTVQLEQKDGDISILELNVTLPEAEESK</sequence>
<reference key="1">
    <citation type="journal article" date="2009" name="PLoS ONE">
        <title>Salmonella paratyphi C: genetic divergence from Salmonella choleraesuis and pathogenic convergence with Salmonella typhi.</title>
        <authorList>
            <person name="Liu W.-Q."/>
            <person name="Feng Y."/>
            <person name="Wang Y."/>
            <person name="Zou Q.-H."/>
            <person name="Chen F."/>
            <person name="Guo J.-T."/>
            <person name="Peng Y.-H."/>
            <person name="Jin Y."/>
            <person name="Li Y.-G."/>
            <person name="Hu S.-N."/>
            <person name="Johnston R.N."/>
            <person name="Liu G.-R."/>
            <person name="Liu S.-L."/>
        </authorList>
    </citation>
    <scope>NUCLEOTIDE SEQUENCE [LARGE SCALE GENOMIC DNA]</scope>
    <source>
        <strain>RKS4594</strain>
    </source>
</reference>
<evidence type="ECO:0000255" key="1">
    <source>
        <dbReference type="HAMAP-Rule" id="MF_00262"/>
    </source>
</evidence>
<proteinExistence type="inferred from homology"/>
<name>MINE_SALPC</name>
<comment type="function">
    <text evidence="1">Prevents the cell division inhibition by proteins MinC and MinD at internal division sites while permitting inhibition at polar sites. This ensures cell division at the proper site by restricting the formation of a division septum at the midpoint of the long axis of the cell.</text>
</comment>
<comment type="similarity">
    <text evidence="1">Belongs to the MinE family.</text>
</comment>
<feature type="chain" id="PRO_1000191295" description="Cell division topological specificity factor">
    <location>
        <begin position="1"/>
        <end position="88"/>
    </location>
</feature>
<organism>
    <name type="scientific">Salmonella paratyphi C (strain RKS4594)</name>
    <dbReference type="NCBI Taxonomy" id="476213"/>
    <lineage>
        <taxon>Bacteria</taxon>
        <taxon>Pseudomonadati</taxon>
        <taxon>Pseudomonadota</taxon>
        <taxon>Gammaproteobacteria</taxon>
        <taxon>Enterobacterales</taxon>
        <taxon>Enterobacteriaceae</taxon>
        <taxon>Salmonella</taxon>
    </lineage>
</organism>
<dbReference type="EMBL" id="CP000857">
    <property type="protein sequence ID" value="ACN46051.1"/>
    <property type="molecule type" value="Genomic_DNA"/>
</dbReference>
<dbReference type="RefSeq" id="WP_001185666.1">
    <property type="nucleotide sequence ID" value="NC_012125.1"/>
</dbReference>
<dbReference type="SMR" id="C0Q319"/>
<dbReference type="GeneID" id="92972923"/>
<dbReference type="KEGG" id="sei:SPC_1914"/>
<dbReference type="HOGENOM" id="CLU_137929_2_2_6"/>
<dbReference type="Proteomes" id="UP000001599">
    <property type="component" value="Chromosome"/>
</dbReference>
<dbReference type="GO" id="GO:0051301">
    <property type="term" value="P:cell division"/>
    <property type="evidence" value="ECO:0007669"/>
    <property type="project" value="UniProtKB-KW"/>
</dbReference>
<dbReference type="GO" id="GO:0032955">
    <property type="term" value="P:regulation of division septum assembly"/>
    <property type="evidence" value="ECO:0007669"/>
    <property type="project" value="InterPro"/>
</dbReference>
<dbReference type="FunFam" id="3.30.1070.10:FF:000001">
    <property type="entry name" value="Cell division topological specificity factor"/>
    <property type="match status" value="1"/>
</dbReference>
<dbReference type="Gene3D" id="3.30.1070.10">
    <property type="entry name" value="Cell division topological specificity factor MinE"/>
    <property type="match status" value="1"/>
</dbReference>
<dbReference type="HAMAP" id="MF_00262">
    <property type="entry name" value="MinE"/>
    <property type="match status" value="1"/>
</dbReference>
<dbReference type="InterPro" id="IPR005527">
    <property type="entry name" value="MinE"/>
</dbReference>
<dbReference type="InterPro" id="IPR036707">
    <property type="entry name" value="MinE_sf"/>
</dbReference>
<dbReference type="NCBIfam" id="TIGR01215">
    <property type="entry name" value="minE"/>
    <property type="match status" value="1"/>
</dbReference>
<dbReference type="NCBIfam" id="NF001422">
    <property type="entry name" value="PRK00296.1"/>
    <property type="match status" value="1"/>
</dbReference>
<dbReference type="Pfam" id="PF03776">
    <property type="entry name" value="MinE"/>
    <property type="match status" value="1"/>
</dbReference>
<dbReference type="SUPFAM" id="SSF55229">
    <property type="entry name" value="Cell division protein MinE topological specificity domain"/>
    <property type="match status" value="1"/>
</dbReference>